<proteinExistence type="inferred from homology"/>
<keyword id="KW-0067">ATP-binding</keyword>
<keyword id="KW-1003">Cell membrane</keyword>
<keyword id="KW-0406">Ion transport</keyword>
<keyword id="KW-0460">Magnesium</keyword>
<keyword id="KW-0472">Membrane</keyword>
<keyword id="KW-0479">Metal-binding</keyword>
<keyword id="KW-0547">Nucleotide-binding</keyword>
<keyword id="KW-0597">Phosphoprotein</keyword>
<keyword id="KW-0630">Potassium</keyword>
<keyword id="KW-0633">Potassium transport</keyword>
<keyword id="KW-1278">Translocase</keyword>
<keyword id="KW-0812">Transmembrane</keyword>
<keyword id="KW-1133">Transmembrane helix</keyword>
<keyword id="KW-0813">Transport</keyword>
<name>KDPB_LISW6</name>
<sequence length="681" mass="72529">MMEKGIWKDALIQSTKKLSPKLQVKNPVMLLVYVGAILATSLYFLGFFGISDEKSGYTLAIALILWFTVLFANFAEAIAEGRGRAQADSLKMARKDVLARKLKHIDDKTDVIEVASNDLKKDDIVYVLANEQIPMDGEVIEGAASVDESAITGESAPVIRESGGDRSAVTGGTTLVSDWLVIRVTAVSGESFLDKMIAMVEGASRKKTPNEIALQILLVTLSIIFLAVSATLLPFTEFASKQAGSGSAISITNVIALLVCLAPTTIGALLSSIGIAGMSRLNQANVLAMSGRAIEAAGDVDVLLLDKTGTITLGNRKASEFIPVDGVTEQELADAAQLSSIADETAEGRSIVVLAKERFDIRGRDFAEMHAEFVPFTATTRMSGIDYQENTIRKGAADAVRTYVTANGGTYPQECDAIVSKVAGAGGTPLVVVRNNKVLGVIYLKDIVKNGVKERFLDLRKMGIKTIMITGDNPMTAAAIAAEAGVDDFLAEATPEAKLELIREYQREGHLVAMTGDGTNDAPALAQADVAVAMNTGTQAAKEAGNMVDLDSSPTKLIDIVRIGKQLLMTRGALTTFSVANDLAKYFAIIPVLFYGIFPQLEALNLMGLTSPTSAILSAIIYNALIIIFLIPLSLKGVKYREMPAGKLLSRNMLIYGLGGLVAPFIAIKLIDMLLTVLGIV</sequence>
<feature type="chain" id="PRO_1000022442" description="Potassium-transporting ATPase ATP-binding subunit">
    <location>
        <begin position="1"/>
        <end position="681"/>
    </location>
</feature>
<feature type="transmembrane region" description="Helical" evidence="1">
    <location>
        <begin position="30"/>
        <end position="50"/>
    </location>
</feature>
<feature type="transmembrane region" description="Helical" evidence="1">
    <location>
        <begin position="59"/>
        <end position="79"/>
    </location>
</feature>
<feature type="transmembrane region" description="Helical" evidence="1">
    <location>
        <begin position="216"/>
        <end position="236"/>
    </location>
</feature>
<feature type="transmembrane region" description="Helical" evidence="1">
    <location>
        <begin position="255"/>
        <end position="275"/>
    </location>
</feature>
<feature type="transmembrane region" description="Helical" evidence="1">
    <location>
        <begin position="587"/>
        <end position="607"/>
    </location>
</feature>
<feature type="transmembrane region" description="Helical" evidence="1">
    <location>
        <begin position="615"/>
        <end position="635"/>
    </location>
</feature>
<feature type="transmembrane region" description="Helical" evidence="1">
    <location>
        <begin position="661"/>
        <end position="681"/>
    </location>
</feature>
<feature type="active site" description="4-aspartylphosphate intermediate" evidence="1">
    <location>
        <position position="306"/>
    </location>
</feature>
<feature type="binding site" evidence="1">
    <location>
        <position position="343"/>
    </location>
    <ligand>
        <name>ATP</name>
        <dbReference type="ChEBI" id="CHEBI:30616"/>
    </ligand>
</feature>
<feature type="binding site" evidence="1">
    <location>
        <position position="347"/>
    </location>
    <ligand>
        <name>ATP</name>
        <dbReference type="ChEBI" id="CHEBI:30616"/>
    </ligand>
</feature>
<feature type="binding site" evidence="1">
    <location>
        <begin position="376"/>
        <end position="383"/>
    </location>
    <ligand>
        <name>ATP</name>
        <dbReference type="ChEBI" id="CHEBI:30616"/>
    </ligand>
</feature>
<feature type="binding site" evidence="1">
    <location>
        <position position="394"/>
    </location>
    <ligand>
        <name>ATP</name>
        <dbReference type="ChEBI" id="CHEBI:30616"/>
    </ligand>
</feature>
<feature type="binding site" evidence="1">
    <location>
        <position position="517"/>
    </location>
    <ligand>
        <name>Mg(2+)</name>
        <dbReference type="ChEBI" id="CHEBI:18420"/>
    </ligand>
</feature>
<feature type="binding site" evidence="1">
    <location>
        <position position="521"/>
    </location>
    <ligand>
        <name>Mg(2+)</name>
        <dbReference type="ChEBI" id="CHEBI:18420"/>
    </ligand>
</feature>
<reference key="1">
    <citation type="journal article" date="2006" name="J. Bacteriol.">
        <title>Whole-genome sequence of Listeria welshimeri reveals common steps in genome reduction with Listeria innocua as compared to Listeria monocytogenes.</title>
        <authorList>
            <person name="Hain T."/>
            <person name="Steinweg C."/>
            <person name="Kuenne C.T."/>
            <person name="Billion A."/>
            <person name="Ghai R."/>
            <person name="Chatterjee S.S."/>
            <person name="Domann E."/>
            <person name="Kaerst U."/>
            <person name="Goesmann A."/>
            <person name="Bekel T."/>
            <person name="Bartels D."/>
            <person name="Kaiser O."/>
            <person name="Meyer F."/>
            <person name="Puehler A."/>
            <person name="Weisshaar B."/>
            <person name="Wehland J."/>
            <person name="Liang C."/>
            <person name="Dandekar T."/>
            <person name="Lampidis R."/>
            <person name="Kreft J."/>
            <person name="Goebel W."/>
            <person name="Chakraborty T."/>
        </authorList>
    </citation>
    <scope>NUCLEOTIDE SEQUENCE [LARGE SCALE GENOMIC DNA]</scope>
    <source>
        <strain>ATCC 35897 / DSM 20650 / CCUG 15529 / CIP 8149 / NCTC 11857 / SLCC 5334 / V8</strain>
    </source>
</reference>
<comment type="function">
    <text evidence="1">Part of the high-affinity ATP-driven potassium transport (or Kdp) system, which catalyzes the hydrolysis of ATP coupled with the electrogenic transport of potassium into the cytoplasm. This subunit is responsible for energy coupling to the transport system and for the release of the potassium ions to the cytoplasm.</text>
</comment>
<comment type="catalytic activity">
    <reaction evidence="1">
        <text>K(+)(out) + ATP + H2O = K(+)(in) + ADP + phosphate + H(+)</text>
        <dbReference type="Rhea" id="RHEA:16777"/>
        <dbReference type="ChEBI" id="CHEBI:15377"/>
        <dbReference type="ChEBI" id="CHEBI:15378"/>
        <dbReference type="ChEBI" id="CHEBI:29103"/>
        <dbReference type="ChEBI" id="CHEBI:30616"/>
        <dbReference type="ChEBI" id="CHEBI:43474"/>
        <dbReference type="ChEBI" id="CHEBI:456216"/>
        <dbReference type="EC" id="7.2.2.6"/>
    </reaction>
    <physiologicalReaction direction="left-to-right" evidence="1">
        <dbReference type="Rhea" id="RHEA:16778"/>
    </physiologicalReaction>
</comment>
<comment type="subunit">
    <text evidence="1">The system is composed of three essential subunits: KdpA, KdpB and KdpC.</text>
</comment>
<comment type="subcellular location">
    <subcellularLocation>
        <location evidence="1">Cell membrane</location>
        <topology evidence="1">Multi-pass membrane protein</topology>
    </subcellularLocation>
</comment>
<comment type="similarity">
    <text evidence="1">Belongs to the cation transport ATPase (P-type) (TC 3.A.3) family. Type IA subfamily.</text>
</comment>
<evidence type="ECO:0000255" key="1">
    <source>
        <dbReference type="HAMAP-Rule" id="MF_00285"/>
    </source>
</evidence>
<organism>
    <name type="scientific">Listeria welshimeri serovar 6b (strain ATCC 35897 / DSM 20650 / CCUG 15529 / CIP 8149 / NCTC 11857 / SLCC 5334 / V8)</name>
    <dbReference type="NCBI Taxonomy" id="386043"/>
    <lineage>
        <taxon>Bacteria</taxon>
        <taxon>Bacillati</taxon>
        <taxon>Bacillota</taxon>
        <taxon>Bacilli</taxon>
        <taxon>Bacillales</taxon>
        <taxon>Listeriaceae</taxon>
        <taxon>Listeria</taxon>
    </lineage>
</organism>
<dbReference type="EC" id="7.2.2.6" evidence="1"/>
<dbReference type="EMBL" id="AM263198">
    <property type="protein sequence ID" value="CAK22048.1"/>
    <property type="molecule type" value="Genomic_DNA"/>
</dbReference>
<dbReference type="RefSeq" id="WP_011703326.1">
    <property type="nucleotide sequence ID" value="NC_008555.1"/>
</dbReference>
<dbReference type="SMR" id="A0AM16"/>
<dbReference type="STRING" id="386043.lwe2630"/>
<dbReference type="GeneID" id="61190554"/>
<dbReference type="KEGG" id="lwe:lwe2630"/>
<dbReference type="eggNOG" id="COG2216">
    <property type="taxonomic scope" value="Bacteria"/>
</dbReference>
<dbReference type="HOGENOM" id="CLU_025728_2_0_9"/>
<dbReference type="OrthoDB" id="9813266at2"/>
<dbReference type="Proteomes" id="UP000000779">
    <property type="component" value="Chromosome"/>
</dbReference>
<dbReference type="GO" id="GO:0005886">
    <property type="term" value="C:plasma membrane"/>
    <property type="evidence" value="ECO:0007669"/>
    <property type="project" value="UniProtKB-SubCell"/>
</dbReference>
<dbReference type="GO" id="GO:0005524">
    <property type="term" value="F:ATP binding"/>
    <property type="evidence" value="ECO:0007669"/>
    <property type="project" value="UniProtKB-UniRule"/>
</dbReference>
<dbReference type="GO" id="GO:0016887">
    <property type="term" value="F:ATP hydrolysis activity"/>
    <property type="evidence" value="ECO:0007669"/>
    <property type="project" value="InterPro"/>
</dbReference>
<dbReference type="GO" id="GO:0000287">
    <property type="term" value="F:magnesium ion binding"/>
    <property type="evidence" value="ECO:0007669"/>
    <property type="project" value="UniProtKB-UniRule"/>
</dbReference>
<dbReference type="GO" id="GO:0008556">
    <property type="term" value="F:P-type potassium transmembrane transporter activity"/>
    <property type="evidence" value="ECO:0007669"/>
    <property type="project" value="UniProtKB-UniRule"/>
</dbReference>
<dbReference type="CDD" id="cd02078">
    <property type="entry name" value="P-type_ATPase_K"/>
    <property type="match status" value="1"/>
</dbReference>
<dbReference type="FunFam" id="2.70.150.10:FF:000010">
    <property type="entry name" value="Potassium-transporting ATPase ATP-binding subunit"/>
    <property type="match status" value="1"/>
</dbReference>
<dbReference type="FunFam" id="3.40.1110.10:FF:000007">
    <property type="entry name" value="Potassium-transporting ATPase ATP-binding subunit"/>
    <property type="match status" value="1"/>
</dbReference>
<dbReference type="Gene3D" id="3.40.1110.10">
    <property type="entry name" value="Calcium-transporting ATPase, cytoplasmic domain N"/>
    <property type="match status" value="1"/>
</dbReference>
<dbReference type="Gene3D" id="2.70.150.10">
    <property type="entry name" value="Calcium-transporting ATPase, cytoplasmic transduction domain A"/>
    <property type="match status" value="1"/>
</dbReference>
<dbReference type="Gene3D" id="3.40.50.1000">
    <property type="entry name" value="HAD superfamily/HAD-like"/>
    <property type="match status" value="1"/>
</dbReference>
<dbReference type="HAMAP" id="MF_00285">
    <property type="entry name" value="KdpB"/>
    <property type="match status" value="1"/>
</dbReference>
<dbReference type="InterPro" id="IPR023299">
    <property type="entry name" value="ATPase_P-typ_cyto_dom_N"/>
</dbReference>
<dbReference type="InterPro" id="IPR018303">
    <property type="entry name" value="ATPase_P-typ_P_site"/>
</dbReference>
<dbReference type="InterPro" id="IPR023298">
    <property type="entry name" value="ATPase_P-typ_TM_dom_sf"/>
</dbReference>
<dbReference type="InterPro" id="IPR008250">
    <property type="entry name" value="ATPase_P-typ_transduc_dom_A_sf"/>
</dbReference>
<dbReference type="InterPro" id="IPR036412">
    <property type="entry name" value="HAD-like_sf"/>
</dbReference>
<dbReference type="InterPro" id="IPR023214">
    <property type="entry name" value="HAD_sf"/>
</dbReference>
<dbReference type="InterPro" id="IPR006391">
    <property type="entry name" value="P-type_ATPase_bsu_IA"/>
</dbReference>
<dbReference type="InterPro" id="IPR001757">
    <property type="entry name" value="P_typ_ATPase"/>
</dbReference>
<dbReference type="InterPro" id="IPR044492">
    <property type="entry name" value="P_typ_ATPase_HD_dom"/>
</dbReference>
<dbReference type="NCBIfam" id="TIGR01494">
    <property type="entry name" value="ATPase_P-type"/>
    <property type="match status" value="2"/>
</dbReference>
<dbReference type="NCBIfam" id="TIGR01497">
    <property type="entry name" value="kdpB"/>
    <property type="match status" value="1"/>
</dbReference>
<dbReference type="PANTHER" id="PTHR43743">
    <property type="entry name" value="POTASSIUM-TRANSPORTING ATPASE ATP-BINDING SUBUNIT"/>
    <property type="match status" value="1"/>
</dbReference>
<dbReference type="PANTHER" id="PTHR43743:SF1">
    <property type="entry name" value="POTASSIUM-TRANSPORTING ATPASE ATP-BINDING SUBUNIT"/>
    <property type="match status" value="1"/>
</dbReference>
<dbReference type="Pfam" id="PF00122">
    <property type="entry name" value="E1-E2_ATPase"/>
    <property type="match status" value="1"/>
</dbReference>
<dbReference type="Pfam" id="PF00702">
    <property type="entry name" value="Hydrolase"/>
    <property type="match status" value="1"/>
</dbReference>
<dbReference type="PRINTS" id="PR00119">
    <property type="entry name" value="CATATPASE"/>
</dbReference>
<dbReference type="PRINTS" id="PR00120">
    <property type="entry name" value="HATPASE"/>
</dbReference>
<dbReference type="SFLD" id="SFLDS00003">
    <property type="entry name" value="Haloacid_Dehalogenase"/>
    <property type="match status" value="1"/>
</dbReference>
<dbReference type="SFLD" id="SFLDF00027">
    <property type="entry name" value="p-type_atpase"/>
    <property type="match status" value="1"/>
</dbReference>
<dbReference type="SUPFAM" id="SSF81653">
    <property type="entry name" value="Calcium ATPase, transduction domain A"/>
    <property type="match status" value="1"/>
</dbReference>
<dbReference type="SUPFAM" id="SSF81665">
    <property type="entry name" value="Calcium ATPase, transmembrane domain M"/>
    <property type="match status" value="1"/>
</dbReference>
<dbReference type="SUPFAM" id="SSF56784">
    <property type="entry name" value="HAD-like"/>
    <property type="match status" value="1"/>
</dbReference>
<dbReference type="SUPFAM" id="SSF81660">
    <property type="entry name" value="Metal cation-transporting ATPase, ATP-binding domain N"/>
    <property type="match status" value="1"/>
</dbReference>
<dbReference type="PROSITE" id="PS00154">
    <property type="entry name" value="ATPASE_E1_E2"/>
    <property type="match status" value="1"/>
</dbReference>
<protein>
    <recommendedName>
        <fullName evidence="1">Potassium-transporting ATPase ATP-binding subunit</fullName>
        <ecNumber evidence="1">7.2.2.6</ecNumber>
    </recommendedName>
    <alternativeName>
        <fullName evidence="1">ATP phosphohydrolase [potassium-transporting] B chain</fullName>
    </alternativeName>
    <alternativeName>
        <fullName evidence="1">Potassium-binding and translocating subunit B</fullName>
    </alternativeName>
    <alternativeName>
        <fullName evidence="1">Potassium-translocating ATPase B chain</fullName>
    </alternativeName>
</protein>
<gene>
    <name evidence="1" type="primary">kdpB</name>
    <name type="ordered locus">lwe2630</name>
</gene>
<accession>A0AM16</accession>